<feature type="chain" id="PRO_0000326979" description="Protoheme IX farnesyltransferase">
    <location>
        <begin position="1"/>
        <end position="296"/>
    </location>
</feature>
<feature type="transmembrane region" description="Helical" evidence="1">
    <location>
        <begin position="9"/>
        <end position="29"/>
    </location>
</feature>
<feature type="transmembrane region" description="Helical" evidence="1">
    <location>
        <begin position="36"/>
        <end position="56"/>
    </location>
</feature>
<feature type="transmembrane region" description="Helical" evidence="1">
    <location>
        <begin position="75"/>
        <end position="95"/>
    </location>
</feature>
<feature type="transmembrane region" description="Helical" evidence="1">
    <location>
        <begin position="99"/>
        <end position="119"/>
    </location>
</feature>
<feature type="transmembrane region" description="Helical" evidence="1">
    <location>
        <begin position="133"/>
        <end position="153"/>
    </location>
</feature>
<feature type="transmembrane region" description="Helical" evidence="1">
    <location>
        <begin position="163"/>
        <end position="183"/>
    </location>
</feature>
<feature type="transmembrane region" description="Helical" evidence="1">
    <location>
        <begin position="209"/>
        <end position="229"/>
    </location>
</feature>
<feature type="transmembrane region" description="Helical" evidence="1">
    <location>
        <begin position="234"/>
        <end position="254"/>
    </location>
</feature>
<feature type="transmembrane region" description="Helical" evidence="1">
    <location>
        <begin position="265"/>
        <end position="285"/>
    </location>
</feature>
<evidence type="ECO:0000255" key="1">
    <source>
        <dbReference type="HAMAP-Rule" id="MF_00154"/>
    </source>
</evidence>
<evidence type="ECO:0000305" key="2"/>
<proteinExistence type="inferred from homology"/>
<organism>
    <name type="scientific">Yersinia pestis bv. Antiqua (strain Antiqua)</name>
    <dbReference type="NCBI Taxonomy" id="360102"/>
    <lineage>
        <taxon>Bacteria</taxon>
        <taxon>Pseudomonadati</taxon>
        <taxon>Pseudomonadota</taxon>
        <taxon>Gammaproteobacteria</taxon>
        <taxon>Enterobacterales</taxon>
        <taxon>Yersiniaceae</taxon>
        <taxon>Yersinia</taxon>
    </lineage>
</organism>
<name>CYOE_YERPA</name>
<reference key="1">
    <citation type="journal article" date="2006" name="J. Bacteriol.">
        <title>Complete genome sequence of Yersinia pestis strains Antiqua and Nepal516: evidence of gene reduction in an emerging pathogen.</title>
        <authorList>
            <person name="Chain P.S.G."/>
            <person name="Hu P."/>
            <person name="Malfatti S.A."/>
            <person name="Radnedge L."/>
            <person name="Larimer F."/>
            <person name="Vergez L.M."/>
            <person name="Worsham P."/>
            <person name="Chu M.C."/>
            <person name="Andersen G.L."/>
        </authorList>
    </citation>
    <scope>NUCLEOTIDE SEQUENCE [LARGE SCALE GENOMIC DNA]</scope>
    <source>
        <strain>Antiqua</strain>
    </source>
</reference>
<keyword id="KW-0997">Cell inner membrane</keyword>
<keyword id="KW-1003">Cell membrane</keyword>
<keyword id="KW-0350">Heme biosynthesis</keyword>
<keyword id="KW-0472">Membrane</keyword>
<keyword id="KW-0808">Transferase</keyword>
<keyword id="KW-0812">Transmembrane</keyword>
<keyword id="KW-1133">Transmembrane helix</keyword>
<protein>
    <recommendedName>
        <fullName evidence="1">Protoheme IX farnesyltransferase</fullName>
        <ecNumber evidence="1">2.5.1.141</ecNumber>
    </recommendedName>
    <alternativeName>
        <fullName evidence="1">Heme B farnesyltransferase</fullName>
    </alternativeName>
    <alternativeName>
        <fullName evidence="1">Heme O synthase</fullName>
    </alternativeName>
</protein>
<dbReference type="EC" id="2.5.1.141" evidence="1"/>
<dbReference type="EMBL" id="CP000308">
    <property type="protein sequence ID" value="ABG14624.1"/>
    <property type="status" value="ALT_INIT"/>
    <property type="molecule type" value="Genomic_DNA"/>
</dbReference>
<dbReference type="SMR" id="Q1C4J8"/>
<dbReference type="KEGG" id="ypa:YPA_2662"/>
<dbReference type="UniPathway" id="UPA00834">
    <property type="reaction ID" value="UER00712"/>
</dbReference>
<dbReference type="Proteomes" id="UP000001971">
    <property type="component" value="Chromosome"/>
</dbReference>
<dbReference type="GO" id="GO:0005886">
    <property type="term" value="C:plasma membrane"/>
    <property type="evidence" value="ECO:0007669"/>
    <property type="project" value="UniProtKB-SubCell"/>
</dbReference>
<dbReference type="GO" id="GO:0008495">
    <property type="term" value="F:protoheme IX farnesyltransferase activity"/>
    <property type="evidence" value="ECO:0007669"/>
    <property type="project" value="UniProtKB-UniRule"/>
</dbReference>
<dbReference type="GO" id="GO:0048034">
    <property type="term" value="P:heme O biosynthetic process"/>
    <property type="evidence" value="ECO:0007669"/>
    <property type="project" value="UniProtKB-UniRule"/>
</dbReference>
<dbReference type="CDD" id="cd13957">
    <property type="entry name" value="PT_UbiA_Cox10"/>
    <property type="match status" value="1"/>
</dbReference>
<dbReference type="FunFam" id="1.10.357.140:FF:000001">
    <property type="entry name" value="Protoheme IX farnesyltransferase"/>
    <property type="match status" value="1"/>
</dbReference>
<dbReference type="Gene3D" id="1.10.357.140">
    <property type="entry name" value="UbiA prenyltransferase"/>
    <property type="match status" value="1"/>
</dbReference>
<dbReference type="HAMAP" id="MF_00154">
    <property type="entry name" value="CyoE_CtaB"/>
    <property type="match status" value="1"/>
</dbReference>
<dbReference type="InterPro" id="IPR006369">
    <property type="entry name" value="Protohaem_IX_farnesylTrfase"/>
</dbReference>
<dbReference type="InterPro" id="IPR000537">
    <property type="entry name" value="UbiA_prenyltransferase"/>
</dbReference>
<dbReference type="InterPro" id="IPR030470">
    <property type="entry name" value="UbiA_prenylTrfase_CS"/>
</dbReference>
<dbReference type="InterPro" id="IPR044878">
    <property type="entry name" value="UbiA_sf"/>
</dbReference>
<dbReference type="NCBIfam" id="TIGR01473">
    <property type="entry name" value="cyoE_ctaB"/>
    <property type="match status" value="1"/>
</dbReference>
<dbReference type="NCBIfam" id="NF003348">
    <property type="entry name" value="PRK04375.1-1"/>
    <property type="match status" value="1"/>
</dbReference>
<dbReference type="PANTHER" id="PTHR43448">
    <property type="entry name" value="PROTOHEME IX FARNESYLTRANSFERASE, MITOCHONDRIAL"/>
    <property type="match status" value="1"/>
</dbReference>
<dbReference type="PANTHER" id="PTHR43448:SF2">
    <property type="entry name" value="PROTOHEME IX FARNESYLTRANSFERASE, MITOCHONDRIAL"/>
    <property type="match status" value="1"/>
</dbReference>
<dbReference type="Pfam" id="PF01040">
    <property type="entry name" value="UbiA"/>
    <property type="match status" value="1"/>
</dbReference>
<dbReference type="PROSITE" id="PS00943">
    <property type="entry name" value="UBIA"/>
    <property type="match status" value="1"/>
</dbReference>
<accession>Q1C4J8</accession>
<comment type="function">
    <text evidence="1">Converts heme B (protoheme IX) to heme O by substitution of the vinyl group on carbon 2 of heme B porphyrin ring with a hydroxyethyl farnesyl side group.</text>
</comment>
<comment type="catalytic activity">
    <reaction evidence="1">
        <text>heme b + (2E,6E)-farnesyl diphosphate + H2O = Fe(II)-heme o + diphosphate</text>
        <dbReference type="Rhea" id="RHEA:28070"/>
        <dbReference type="ChEBI" id="CHEBI:15377"/>
        <dbReference type="ChEBI" id="CHEBI:33019"/>
        <dbReference type="ChEBI" id="CHEBI:60344"/>
        <dbReference type="ChEBI" id="CHEBI:60530"/>
        <dbReference type="ChEBI" id="CHEBI:175763"/>
        <dbReference type="EC" id="2.5.1.141"/>
    </reaction>
</comment>
<comment type="pathway">
    <text evidence="1">Porphyrin-containing compound metabolism; heme O biosynthesis; heme O from protoheme: step 1/1.</text>
</comment>
<comment type="subcellular location">
    <subcellularLocation>
        <location evidence="1">Cell inner membrane</location>
        <topology evidence="1">Multi-pass membrane protein</topology>
    </subcellularLocation>
</comment>
<comment type="miscellaneous">
    <text evidence="1">Carbon 2 of the heme B porphyrin ring is defined according to the Fischer nomenclature.</text>
</comment>
<comment type="similarity">
    <text evidence="1">Belongs to the UbiA prenyltransferase family. Protoheme IX farnesyltransferase subfamily.</text>
</comment>
<comment type="sequence caution" evidence="2">
    <conflict type="erroneous initiation">
        <sequence resource="EMBL-CDS" id="ABG14624"/>
    </conflict>
</comment>
<gene>
    <name evidence="1" type="primary">cyoE</name>
    <name type="ordered locus">YPA_2662</name>
</gene>
<sequence length="296" mass="32179">MMIKQYLQVTKPGIIFGNLISVIGGFLLASKGDIDYPLFLSTLLGVSLVVASGCVFNNYIDRDIDKIMERTKNRVLVKGLIDPKVSLIYASVLGIAGMLLLYVAANALAMMLAVIGFVIYVGVYSLYMKRKSVYGTLIGSLSGAAPPVIGYCAVTGQFDTGALILLLIFSLWQMPHSYAIAIFRFKDYQAANIPVLPVIKGISVTKNHITLYILAFMVATLMLTLSGYAGYKYLVVAAAVSVWWLGMALRGYKATNDSVWARKLFVFSIIAITSLSVMMSVDFNVHSSAVLLTYAG</sequence>